<organism>
    <name type="scientific">Burkholderia mallei (strain ATCC 23344)</name>
    <dbReference type="NCBI Taxonomy" id="243160"/>
    <lineage>
        <taxon>Bacteria</taxon>
        <taxon>Pseudomonadati</taxon>
        <taxon>Pseudomonadota</taxon>
        <taxon>Betaproteobacteria</taxon>
        <taxon>Burkholderiales</taxon>
        <taxon>Burkholderiaceae</taxon>
        <taxon>Burkholderia</taxon>
        <taxon>pseudomallei group</taxon>
    </lineage>
</organism>
<gene>
    <name evidence="1" type="primary">sucC</name>
    <name type="ordered locus">BMA0275</name>
</gene>
<protein>
    <recommendedName>
        <fullName evidence="1">Succinate--CoA ligase [ADP-forming] subunit beta</fullName>
        <ecNumber evidence="1">6.2.1.5</ecNumber>
    </recommendedName>
    <alternativeName>
        <fullName evidence="1">Succinyl-CoA synthetase subunit beta</fullName>
        <shortName evidence="1">SCS-beta</shortName>
    </alternativeName>
</protein>
<evidence type="ECO:0000255" key="1">
    <source>
        <dbReference type="HAMAP-Rule" id="MF_00558"/>
    </source>
</evidence>
<comment type="function">
    <text evidence="1">Succinyl-CoA synthetase functions in the citric acid cycle (TCA), coupling the hydrolysis of succinyl-CoA to the synthesis of either ATP or GTP and thus represents the only step of substrate-level phosphorylation in the TCA. The beta subunit provides nucleotide specificity of the enzyme and binds the substrate succinate, while the binding sites for coenzyme A and phosphate are found in the alpha subunit.</text>
</comment>
<comment type="catalytic activity">
    <reaction evidence="1">
        <text>succinate + ATP + CoA = succinyl-CoA + ADP + phosphate</text>
        <dbReference type="Rhea" id="RHEA:17661"/>
        <dbReference type="ChEBI" id="CHEBI:30031"/>
        <dbReference type="ChEBI" id="CHEBI:30616"/>
        <dbReference type="ChEBI" id="CHEBI:43474"/>
        <dbReference type="ChEBI" id="CHEBI:57287"/>
        <dbReference type="ChEBI" id="CHEBI:57292"/>
        <dbReference type="ChEBI" id="CHEBI:456216"/>
        <dbReference type="EC" id="6.2.1.5"/>
    </reaction>
    <physiologicalReaction direction="right-to-left" evidence="1">
        <dbReference type="Rhea" id="RHEA:17663"/>
    </physiologicalReaction>
</comment>
<comment type="catalytic activity">
    <reaction evidence="1">
        <text>GTP + succinate + CoA = succinyl-CoA + GDP + phosphate</text>
        <dbReference type="Rhea" id="RHEA:22120"/>
        <dbReference type="ChEBI" id="CHEBI:30031"/>
        <dbReference type="ChEBI" id="CHEBI:37565"/>
        <dbReference type="ChEBI" id="CHEBI:43474"/>
        <dbReference type="ChEBI" id="CHEBI:57287"/>
        <dbReference type="ChEBI" id="CHEBI:57292"/>
        <dbReference type="ChEBI" id="CHEBI:58189"/>
    </reaction>
    <physiologicalReaction direction="right-to-left" evidence="1">
        <dbReference type="Rhea" id="RHEA:22122"/>
    </physiologicalReaction>
</comment>
<comment type="cofactor">
    <cofactor evidence="1">
        <name>Mg(2+)</name>
        <dbReference type="ChEBI" id="CHEBI:18420"/>
    </cofactor>
    <text evidence="1">Binds 1 Mg(2+) ion per subunit.</text>
</comment>
<comment type="pathway">
    <text evidence="1">Carbohydrate metabolism; tricarboxylic acid cycle; succinate from succinyl-CoA (ligase route): step 1/1.</text>
</comment>
<comment type="subunit">
    <text evidence="1">Heterotetramer of two alpha and two beta subunits.</text>
</comment>
<comment type="similarity">
    <text evidence="1">Belongs to the succinate/malate CoA ligase beta subunit family.</text>
</comment>
<reference key="1">
    <citation type="journal article" date="2004" name="Proc. Natl. Acad. Sci. U.S.A.">
        <title>Structural flexibility in the Burkholderia mallei genome.</title>
        <authorList>
            <person name="Nierman W.C."/>
            <person name="DeShazer D."/>
            <person name="Kim H.S."/>
            <person name="Tettelin H."/>
            <person name="Nelson K.E."/>
            <person name="Feldblyum T.V."/>
            <person name="Ulrich R.L."/>
            <person name="Ronning C.M."/>
            <person name="Brinkac L.M."/>
            <person name="Daugherty S.C."/>
            <person name="Davidsen T.D."/>
            <person name="DeBoy R.T."/>
            <person name="Dimitrov G."/>
            <person name="Dodson R.J."/>
            <person name="Durkin A.S."/>
            <person name="Gwinn M.L."/>
            <person name="Haft D.H."/>
            <person name="Khouri H.M."/>
            <person name="Kolonay J.F."/>
            <person name="Madupu R."/>
            <person name="Mohammoud Y."/>
            <person name="Nelson W.C."/>
            <person name="Radune D."/>
            <person name="Romero C.M."/>
            <person name="Sarria S."/>
            <person name="Selengut J."/>
            <person name="Shamblin C."/>
            <person name="Sullivan S.A."/>
            <person name="White O."/>
            <person name="Yu Y."/>
            <person name="Zafar N."/>
            <person name="Zhou L."/>
            <person name="Fraser C.M."/>
        </authorList>
    </citation>
    <scope>NUCLEOTIDE SEQUENCE [LARGE SCALE GENOMIC DNA]</scope>
    <source>
        <strain>ATCC 23344</strain>
    </source>
</reference>
<accession>Q62MG7</accession>
<sequence length="388" mass="41286">MKIHEYQGKEILRKFGVAVPRGKPAFSVDEAVKVAQELGGPVWVVKAQIHAGGRGKGGGVKVAKSLEQVREYSNQILGMQLKTHQTGPEGQKVNRLLIEEGADIKKELYVGIVIDRVSQKVVVMASSEGGMDIEEVAEKTPEAIHKVAVEPSVGLQDAEADDLAKKIGVPDASIPQAREILKGLYKSFWETDASLAEINPLVLTGDGKVIALDAKFNFDSNALFRHPEIVAYRDLDEEDPAEIEASKFDLAYISLDGNIGCLVNGAGLAMATMDTIKLFGGEPANFLDVGGGATTEKVTEAFKLMLKNPGLKAILVNIFGGIMRCDVIAEGVIAGSKAVNLNVPLVVRMKGTNEDLGKKMLAESGLPIISADSMEEAAQKVVAAAAGK</sequence>
<dbReference type="EC" id="6.2.1.5" evidence="1"/>
<dbReference type="EMBL" id="CP000010">
    <property type="protein sequence ID" value="AAU48737.1"/>
    <property type="molecule type" value="Genomic_DNA"/>
</dbReference>
<dbReference type="RefSeq" id="WP_004189251.1">
    <property type="nucleotide sequence ID" value="NC_006348.1"/>
</dbReference>
<dbReference type="RefSeq" id="YP_102101.1">
    <property type="nucleotide sequence ID" value="NC_006348.1"/>
</dbReference>
<dbReference type="SMR" id="Q62MG7"/>
<dbReference type="GeneID" id="92978047"/>
<dbReference type="KEGG" id="bma:BMA0275"/>
<dbReference type="PATRIC" id="fig|243160.12.peg.269"/>
<dbReference type="eggNOG" id="COG0045">
    <property type="taxonomic scope" value="Bacteria"/>
</dbReference>
<dbReference type="HOGENOM" id="CLU_037430_0_2_4"/>
<dbReference type="UniPathway" id="UPA00223">
    <property type="reaction ID" value="UER00999"/>
</dbReference>
<dbReference type="Proteomes" id="UP000006693">
    <property type="component" value="Chromosome 1"/>
</dbReference>
<dbReference type="GO" id="GO:0005829">
    <property type="term" value="C:cytosol"/>
    <property type="evidence" value="ECO:0007669"/>
    <property type="project" value="TreeGrafter"/>
</dbReference>
<dbReference type="GO" id="GO:0042709">
    <property type="term" value="C:succinate-CoA ligase complex"/>
    <property type="evidence" value="ECO:0007669"/>
    <property type="project" value="TreeGrafter"/>
</dbReference>
<dbReference type="GO" id="GO:0005524">
    <property type="term" value="F:ATP binding"/>
    <property type="evidence" value="ECO:0007669"/>
    <property type="project" value="UniProtKB-UniRule"/>
</dbReference>
<dbReference type="GO" id="GO:0000287">
    <property type="term" value="F:magnesium ion binding"/>
    <property type="evidence" value="ECO:0007669"/>
    <property type="project" value="UniProtKB-UniRule"/>
</dbReference>
<dbReference type="GO" id="GO:0004775">
    <property type="term" value="F:succinate-CoA ligase (ADP-forming) activity"/>
    <property type="evidence" value="ECO:0007669"/>
    <property type="project" value="UniProtKB-UniRule"/>
</dbReference>
<dbReference type="GO" id="GO:0004776">
    <property type="term" value="F:succinate-CoA ligase (GDP-forming) activity"/>
    <property type="evidence" value="ECO:0007669"/>
    <property type="project" value="RHEA"/>
</dbReference>
<dbReference type="GO" id="GO:0006104">
    <property type="term" value="P:succinyl-CoA metabolic process"/>
    <property type="evidence" value="ECO:0007669"/>
    <property type="project" value="TreeGrafter"/>
</dbReference>
<dbReference type="GO" id="GO:0006099">
    <property type="term" value="P:tricarboxylic acid cycle"/>
    <property type="evidence" value="ECO:0007669"/>
    <property type="project" value="UniProtKB-UniRule"/>
</dbReference>
<dbReference type="FunFam" id="3.30.1490.20:FF:000002">
    <property type="entry name" value="Succinate--CoA ligase [ADP-forming] subunit beta"/>
    <property type="match status" value="1"/>
</dbReference>
<dbReference type="FunFam" id="3.30.470.20:FF:000002">
    <property type="entry name" value="Succinate--CoA ligase [ADP-forming] subunit beta"/>
    <property type="match status" value="1"/>
</dbReference>
<dbReference type="FunFam" id="3.40.50.261:FF:000001">
    <property type="entry name" value="Succinate--CoA ligase [ADP-forming] subunit beta"/>
    <property type="match status" value="1"/>
</dbReference>
<dbReference type="Gene3D" id="3.30.1490.20">
    <property type="entry name" value="ATP-grasp fold, A domain"/>
    <property type="match status" value="1"/>
</dbReference>
<dbReference type="Gene3D" id="3.30.470.20">
    <property type="entry name" value="ATP-grasp fold, B domain"/>
    <property type="match status" value="1"/>
</dbReference>
<dbReference type="Gene3D" id="3.40.50.261">
    <property type="entry name" value="Succinyl-CoA synthetase domains"/>
    <property type="match status" value="1"/>
</dbReference>
<dbReference type="HAMAP" id="MF_00558">
    <property type="entry name" value="Succ_CoA_beta"/>
    <property type="match status" value="1"/>
</dbReference>
<dbReference type="InterPro" id="IPR011761">
    <property type="entry name" value="ATP-grasp"/>
</dbReference>
<dbReference type="InterPro" id="IPR013650">
    <property type="entry name" value="ATP-grasp_succ-CoA_synth-type"/>
</dbReference>
<dbReference type="InterPro" id="IPR013815">
    <property type="entry name" value="ATP_grasp_subdomain_1"/>
</dbReference>
<dbReference type="InterPro" id="IPR017866">
    <property type="entry name" value="Succ-CoA_synthase_bsu_CS"/>
</dbReference>
<dbReference type="InterPro" id="IPR005811">
    <property type="entry name" value="SUCC_ACL_C"/>
</dbReference>
<dbReference type="InterPro" id="IPR005809">
    <property type="entry name" value="Succ_CoA_ligase-like_bsu"/>
</dbReference>
<dbReference type="InterPro" id="IPR016102">
    <property type="entry name" value="Succinyl-CoA_synth-like"/>
</dbReference>
<dbReference type="NCBIfam" id="NF001913">
    <property type="entry name" value="PRK00696.1"/>
    <property type="match status" value="1"/>
</dbReference>
<dbReference type="NCBIfam" id="TIGR01016">
    <property type="entry name" value="sucCoAbeta"/>
    <property type="match status" value="1"/>
</dbReference>
<dbReference type="PANTHER" id="PTHR11815:SF10">
    <property type="entry name" value="SUCCINATE--COA LIGASE [GDP-FORMING] SUBUNIT BETA, MITOCHONDRIAL"/>
    <property type="match status" value="1"/>
</dbReference>
<dbReference type="PANTHER" id="PTHR11815">
    <property type="entry name" value="SUCCINYL-COA SYNTHETASE BETA CHAIN"/>
    <property type="match status" value="1"/>
</dbReference>
<dbReference type="Pfam" id="PF08442">
    <property type="entry name" value="ATP-grasp_2"/>
    <property type="match status" value="1"/>
</dbReference>
<dbReference type="Pfam" id="PF00549">
    <property type="entry name" value="Ligase_CoA"/>
    <property type="match status" value="1"/>
</dbReference>
<dbReference type="PIRSF" id="PIRSF001554">
    <property type="entry name" value="SucCS_beta"/>
    <property type="match status" value="1"/>
</dbReference>
<dbReference type="SUPFAM" id="SSF56059">
    <property type="entry name" value="Glutathione synthetase ATP-binding domain-like"/>
    <property type="match status" value="1"/>
</dbReference>
<dbReference type="SUPFAM" id="SSF52210">
    <property type="entry name" value="Succinyl-CoA synthetase domains"/>
    <property type="match status" value="1"/>
</dbReference>
<dbReference type="PROSITE" id="PS50975">
    <property type="entry name" value="ATP_GRASP"/>
    <property type="match status" value="1"/>
</dbReference>
<dbReference type="PROSITE" id="PS01217">
    <property type="entry name" value="SUCCINYL_COA_LIG_3"/>
    <property type="match status" value="1"/>
</dbReference>
<name>SUCC_BURMA</name>
<feature type="chain" id="PRO_1000082040" description="Succinate--CoA ligase [ADP-forming] subunit beta">
    <location>
        <begin position="1"/>
        <end position="388"/>
    </location>
</feature>
<feature type="domain" description="ATP-grasp" evidence="1">
    <location>
        <begin position="9"/>
        <end position="244"/>
    </location>
</feature>
<feature type="binding site" evidence="1">
    <location>
        <position position="46"/>
    </location>
    <ligand>
        <name>ATP</name>
        <dbReference type="ChEBI" id="CHEBI:30616"/>
    </ligand>
</feature>
<feature type="binding site" evidence="1">
    <location>
        <begin position="53"/>
        <end position="55"/>
    </location>
    <ligand>
        <name>ATP</name>
        <dbReference type="ChEBI" id="CHEBI:30616"/>
    </ligand>
</feature>
<feature type="binding site" evidence="1">
    <location>
        <position position="99"/>
    </location>
    <ligand>
        <name>ATP</name>
        <dbReference type="ChEBI" id="CHEBI:30616"/>
    </ligand>
</feature>
<feature type="binding site" evidence="1">
    <location>
        <position position="102"/>
    </location>
    <ligand>
        <name>ATP</name>
        <dbReference type="ChEBI" id="CHEBI:30616"/>
    </ligand>
</feature>
<feature type="binding site" evidence="1">
    <location>
        <position position="107"/>
    </location>
    <ligand>
        <name>ATP</name>
        <dbReference type="ChEBI" id="CHEBI:30616"/>
    </ligand>
</feature>
<feature type="binding site" evidence="1">
    <location>
        <position position="199"/>
    </location>
    <ligand>
        <name>Mg(2+)</name>
        <dbReference type="ChEBI" id="CHEBI:18420"/>
    </ligand>
</feature>
<feature type="binding site" evidence="1">
    <location>
        <position position="213"/>
    </location>
    <ligand>
        <name>Mg(2+)</name>
        <dbReference type="ChEBI" id="CHEBI:18420"/>
    </ligand>
</feature>
<feature type="binding site" evidence="1">
    <location>
        <position position="264"/>
    </location>
    <ligand>
        <name>substrate</name>
        <note>ligand shared with subunit alpha</note>
    </ligand>
</feature>
<feature type="binding site" evidence="1">
    <location>
        <begin position="321"/>
        <end position="323"/>
    </location>
    <ligand>
        <name>substrate</name>
        <note>ligand shared with subunit alpha</note>
    </ligand>
</feature>
<keyword id="KW-0067">ATP-binding</keyword>
<keyword id="KW-0436">Ligase</keyword>
<keyword id="KW-0460">Magnesium</keyword>
<keyword id="KW-0479">Metal-binding</keyword>
<keyword id="KW-0547">Nucleotide-binding</keyword>
<keyword id="KW-1185">Reference proteome</keyword>
<keyword id="KW-0816">Tricarboxylic acid cycle</keyword>
<proteinExistence type="inferred from homology"/>